<comment type="similarity">
    <text evidence="1">Belongs to the OsmC/Ohr family.</text>
</comment>
<evidence type="ECO:0000305" key="1"/>
<reference key="1">
    <citation type="journal article" date="2004" name="Proc. Natl. Acad. Sci. U.S.A.">
        <title>Complete genomes of two clinical Staphylococcus aureus strains: evidence for the rapid evolution of virulence and drug resistance.</title>
        <authorList>
            <person name="Holden M.T.G."/>
            <person name="Feil E.J."/>
            <person name="Lindsay J.A."/>
            <person name="Peacock S.J."/>
            <person name="Day N.P.J."/>
            <person name="Enright M.C."/>
            <person name="Foster T.J."/>
            <person name="Moore C.E."/>
            <person name="Hurst L."/>
            <person name="Atkin R."/>
            <person name="Barron A."/>
            <person name="Bason N."/>
            <person name="Bentley S.D."/>
            <person name="Chillingworth C."/>
            <person name="Chillingworth T."/>
            <person name="Churcher C."/>
            <person name="Clark L."/>
            <person name="Corton C."/>
            <person name="Cronin A."/>
            <person name="Doggett J."/>
            <person name="Dowd L."/>
            <person name="Feltwell T."/>
            <person name="Hance Z."/>
            <person name="Harris B."/>
            <person name="Hauser H."/>
            <person name="Holroyd S."/>
            <person name="Jagels K."/>
            <person name="James K.D."/>
            <person name="Lennard N."/>
            <person name="Line A."/>
            <person name="Mayes R."/>
            <person name="Moule S."/>
            <person name="Mungall K."/>
            <person name="Ormond D."/>
            <person name="Quail M.A."/>
            <person name="Rabbinowitsch E."/>
            <person name="Rutherford K.M."/>
            <person name="Sanders M."/>
            <person name="Sharp S."/>
            <person name="Simmonds M."/>
            <person name="Stevens K."/>
            <person name="Whitehead S."/>
            <person name="Barrell B.G."/>
            <person name="Spratt B.G."/>
            <person name="Parkhill J."/>
        </authorList>
    </citation>
    <scope>NUCLEOTIDE SEQUENCE [LARGE SCALE GENOMIC DNA]</scope>
    <source>
        <strain>MSSA476</strain>
    </source>
</reference>
<gene>
    <name type="ordered locus">SAS0768</name>
</gene>
<organism>
    <name type="scientific">Staphylococcus aureus (strain MSSA476)</name>
    <dbReference type="NCBI Taxonomy" id="282459"/>
    <lineage>
        <taxon>Bacteria</taxon>
        <taxon>Bacillati</taxon>
        <taxon>Bacillota</taxon>
        <taxon>Bacilli</taxon>
        <taxon>Bacillales</taxon>
        <taxon>Staphylococcaceae</taxon>
        <taxon>Staphylococcus</taxon>
    </lineage>
</organism>
<dbReference type="EMBL" id="BX571857">
    <property type="protein sequence ID" value="CAG42543.1"/>
    <property type="molecule type" value="Genomic_DNA"/>
</dbReference>
<dbReference type="RefSeq" id="WP_000974464.1">
    <property type="nucleotide sequence ID" value="NC_002953.3"/>
</dbReference>
<dbReference type="SMR" id="Q6GB28"/>
<dbReference type="KEGG" id="sas:SAS0768"/>
<dbReference type="HOGENOM" id="CLU_106355_2_1_9"/>
<dbReference type="GO" id="GO:0006979">
    <property type="term" value="P:response to oxidative stress"/>
    <property type="evidence" value="ECO:0007669"/>
    <property type="project" value="InterPro"/>
</dbReference>
<dbReference type="Gene3D" id="2.20.25.10">
    <property type="match status" value="1"/>
</dbReference>
<dbReference type="Gene3D" id="3.30.300.20">
    <property type="match status" value="1"/>
</dbReference>
<dbReference type="InterPro" id="IPR015946">
    <property type="entry name" value="KH_dom-like_a/b"/>
</dbReference>
<dbReference type="InterPro" id="IPR019953">
    <property type="entry name" value="OHR"/>
</dbReference>
<dbReference type="InterPro" id="IPR003718">
    <property type="entry name" value="OsmC/Ohr_fam"/>
</dbReference>
<dbReference type="InterPro" id="IPR036102">
    <property type="entry name" value="OsmC/Ohrsf"/>
</dbReference>
<dbReference type="NCBIfam" id="TIGR03561">
    <property type="entry name" value="organ_hyd_perox"/>
    <property type="match status" value="1"/>
</dbReference>
<dbReference type="PANTHER" id="PTHR33797">
    <property type="entry name" value="ORGANIC HYDROPEROXIDE RESISTANCE PROTEIN-LIKE"/>
    <property type="match status" value="1"/>
</dbReference>
<dbReference type="PANTHER" id="PTHR33797:SF2">
    <property type="entry name" value="ORGANIC HYDROPEROXIDE RESISTANCE PROTEIN-LIKE"/>
    <property type="match status" value="1"/>
</dbReference>
<dbReference type="Pfam" id="PF02566">
    <property type="entry name" value="OsmC"/>
    <property type="match status" value="1"/>
</dbReference>
<dbReference type="SUPFAM" id="SSF82784">
    <property type="entry name" value="OsmC-like"/>
    <property type="match status" value="1"/>
</dbReference>
<sequence length="140" mass="15329">MAIHYETKATNVGGRKGHVYTDDRALDIDIVSPAQADGKATNPEQLFAAGYASCFNGAFDLILKQNKVRDAHPEVTLTVRLEDDSDSESPKLSVSIDATIKNVISQEEAEKYLQMAHEFCPYSKATQGNINVDLNVNVVD</sequence>
<proteinExistence type="inferred from homology"/>
<name>OHRL_STAAS</name>
<protein>
    <recommendedName>
        <fullName>Organic hydroperoxide resistance protein-like</fullName>
    </recommendedName>
</protein>
<feature type="chain" id="PRO_0000288957" description="Organic hydroperoxide resistance protein-like">
    <location>
        <begin position="1"/>
        <end position="140"/>
    </location>
</feature>
<accession>Q6GB28</accession>